<comment type="function">
    <text evidence="1">Acts as a sulfur carrier required for 2-thiolation of mcm(5)S(2)U at tRNA wobble positions of cytosolic tRNA(Lys), tRNA(Glu) and tRNA(Gln). Serves as sulfur donor in tRNA 2-thiolation reaction by being thiocarboxylated (-COSH) at its C-terminus by the MOCS3 homolog UBA4. The sulfur is then transferred to tRNA to form 2-thiolation of mcm(5)S(2)U. Prior mcm(5) tRNA modification by the elongator complex is required for 2-thiolation. Also acts as a ubiquitin-like protein (UBL) that is covalently conjugated via an isopeptide bond to lysine residues of target proteins such as AHP1. The thiocarboxylated form serves as substrate for conjugation and oxidative stress specifically induces the formation of UBL-protein conjugates.</text>
</comment>
<comment type="pathway">
    <text evidence="1">tRNA modification; 5-methoxycarbonylmethyl-2-thiouridine-tRNA biosynthesis.</text>
</comment>
<comment type="subcellular location">
    <subcellularLocation>
        <location evidence="1">Cytoplasm</location>
    </subcellularLocation>
</comment>
<comment type="PTM">
    <text evidence="1">C-terminal thiocarboxylation occurs in 2 steps, it is first acyl-adenylated (-COAMP) via the hesA/moeB/thiF part of UBA4, then thiocarboxylated (-COSH) via the rhodanese domain of UBA4.</text>
</comment>
<comment type="similarity">
    <text evidence="1">Belongs to the URM1 family.</text>
</comment>
<keyword id="KW-0963">Cytoplasm</keyword>
<keyword id="KW-1017">Isopeptide bond</keyword>
<keyword id="KW-1185">Reference proteome</keyword>
<keyword id="KW-0819">tRNA processing</keyword>
<keyword id="KW-0833">Ubl conjugation pathway</keyword>
<name>URM1_COCIM</name>
<protein>
    <recommendedName>
        <fullName evidence="1">Ubiquitin-related modifier 1</fullName>
    </recommendedName>
</protein>
<gene>
    <name evidence="1" type="primary">URM1</name>
    <name type="ORF">CIMG_02620</name>
</gene>
<accession>Q1E493</accession>
<accession>J3KM52</accession>
<proteinExistence type="inferred from homology"/>
<sequence length="115" mass="12937">MGSHMTGENGQLALLDITVEFTGGLEMLFSNQRKHKISLPSLDITGAPSNIAYLIKYLCQNLMKDERKELFVLDDSVRPGILVLINDADWELEGEEQYRIQQNDNILFVSTLHGG</sequence>
<evidence type="ECO:0000255" key="1">
    <source>
        <dbReference type="HAMAP-Rule" id="MF_03048"/>
    </source>
</evidence>
<organism>
    <name type="scientific">Coccidioides immitis (strain RS)</name>
    <name type="common">Valley fever fungus</name>
    <dbReference type="NCBI Taxonomy" id="246410"/>
    <lineage>
        <taxon>Eukaryota</taxon>
        <taxon>Fungi</taxon>
        <taxon>Dikarya</taxon>
        <taxon>Ascomycota</taxon>
        <taxon>Pezizomycotina</taxon>
        <taxon>Eurotiomycetes</taxon>
        <taxon>Eurotiomycetidae</taxon>
        <taxon>Onygenales</taxon>
        <taxon>Onygenaceae</taxon>
        <taxon>Coccidioides</taxon>
    </lineage>
</organism>
<dbReference type="EMBL" id="GG704911">
    <property type="protein sequence ID" value="EAS37266.3"/>
    <property type="molecule type" value="Genomic_DNA"/>
</dbReference>
<dbReference type="RefSeq" id="XP_001248849.1">
    <property type="nucleotide sequence ID" value="XM_001248848.2"/>
</dbReference>
<dbReference type="SMR" id="Q1E493"/>
<dbReference type="FunCoup" id="Q1E493">
    <property type="interactions" value="853"/>
</dbReference>
<dbReference type="STRING" id="246410.Q1E493"/>
<dbReference type="GeneID" id="4565396"/>
<dbReference type="KEGG" id="cim:CIMG_02620"/>
<dbReference type="VEuPathDB" id="FungiDB:CIMG_02620"/>
<dbReference type="InParanoid" id="Q1E493"/>
<dbReference type="OMA" id="DYELQPN"/>
<dbReference type="OrthoDB" id="10248987at2759"/>
<dbReference type="UniPathway" id="UPA00988"/>
<dbReference type="Proteomes" id="UP000001261">
    <property type="component" value="Unassembled WGS sequence"/>
</dbReference>
<dbReference type="GO" id="GO:0005829">
    <property type="term" value="C:cytosol"/>
    <property type="evidence" value="ECO:0007669"/>
    <property type="project" value="UniProtKB-UniRule"/>
</dbReference>
<dbReference type="GO" id="GO:0032447">
    <property type="term" value="P:protein urmylation"/>
    <property type="evidence" value="ECO:0007669"/>
    <property type="project" value="UniProtKB-UniRule"/>
</dbReference>
<dbReference type="GO" id="GO:0034227">
    <property type="term" value="P:tRNA thio-modification"/>
    <property type="evidence" value="ECO:0007669"/>
    <property type="project" value="UniProtKB-UniRule"/>
</dbReference>
<dbReference type="GO" id="GO:0002098">
    <property type="term" value="P:tRNA wobble uridine modification"/>
    <property type="evidence" value="ECO:0007669"/>
    <property type="project" value="UniProtKB-UniRule"/>
</dbReference>
<dbReference type="CDD" id="cd01764">
    <property type="entry name" value="Ubl_Urm1"/>
    <property type="match status" value="1"/>
</dbReference>
<dbReference type="Gene3D" id="3.10.20.30">
    <property type="match status" value="1"/>
</dbReference>
<dbReference type="HAMAP" id="MF_03048">
    <property type="entry name" value="Urm1"/>
    <property type="match status" value="1"/>
</dbReference>
<dbReference type="InterPro" id="IPR012675">
    <property type="entry name" value="Beta-grasp_dom_sf"/>
</dbReference>
<dbReference type="InterPro" id="IPR016155">
    <property type="entry name" value="Mopterin_synth/thiamin_S_b"/>
</dbReference>
<dbReference type="InterPro" id="IPR015221">
    <property type="entry name" value="Urm1"/>
</dbReference>
<dbReference type="PANTHER" id="PTHR14986">
    <property type="entry name" value="RURM1 PROTEIN"/>
    <property type="match status" value="1"/>
</dbReference>
<dbReference type="Pfam" id="PF09138">
    <property type="entry name" value="Urm1"/>
    <property type="match status" value="1"/>
</dbReference>
<dbReference type="PIRSF" id="PIRSF037379">
    <property type="entry name" value="Ubiquitin-related_modifier_1"/>
    <property type="match status" value="1"/>
</dbReference>
<dbReference type="SUPFAM" id="SSF54285">
    <property type="entry name" value="MoaD/ThiS"/>
    <property type="match status" value="1"/>
</dbReference>
<feature type="chain" id="PRO_0000367879" description="Ubiquitin-related modifier 1">
    <location>
        <begin position="1"/>
        <end position="115"/>
    </location>
</feature>
<feature type="modified residue" description="1-thioglycine" evidence="1">
    <location>
        <position position="115"/>
    </location>
</feature>
<feature type="cross-link" description="Glycyl lysine isopeptide (Gly-Lys) (interchain with K-? in acceptor proteins)" evidence="1">
    <location>
        <position position="115"/>
    </location>
</feature>
<reference key="1">
    <citation type="journal article" date="2009" name="Genome Res.">
        <title>Comparative genomic analyses of the human fungal pathogens Coccidioides and their relatives.</title>
        <authorList>
            <person name="Sharpton T.J."/>
            <person name="Stajich J.E."/>
            <person name="Rounsley S.D."/>
            <person name="Gardner M.J."/>
            <person name="Wortman J.R."/>
            <person name="Jordar V.S."/>
            <person name="Maiti R."/>
            <person name="Kodira C.D."/>
            <person name="Neafsey D.E."/>
            <person name="Zeng Q."/>
            <person name="Hung C.-Y."/>
            <person name="McMahan C."/>
            <person name="Muszewska A."/>
            <person name="Grynberg M."/>
            <person name="Mandel M.A."/>
            <person name="Kellner E.M."/>
            <person name="Barker B.M."/>
            <person name="Galgiani J.N."/>
            <person name="Orbach M.J."/>
            <person name="Kirkland T.N."/>
            <person name="Cole G.T."/>
            <person name="Henn M.R."/>
            <person name="Birren B.W."/>
            <person name="Taylor J.W."/>
        </authorList>
    </citation>
    <scope>NUCLEOTIDE SEQUENCE [LARGE SCALE GENOMIC DNA]</scope>
    <source>
        <strain>RS</strain>
    </source>
</reference>
<reference key="2">
    <citation type="journal article" date="2010" name="Genome Res.">
        <title>Population genomic sequencing of Coccidioides fungi reveals recent hybridization and transposon control.</title>
        <authorList>
            <person name="Neafsey D.E."/>
            <person name="Barker B.M."/>
            <person name="Sharpton T.J."/>
            <person name="Stajich J.E."/>
            <person name="Park D.J."/>
            <person name="Whiston E."/>
            <person name="Hung C.-Y."/>
            <person name="McMahan C."/>
            <person name="White J."/>
            <person name="Sykes S."/>
            <person name="Heiman D."/>
            <person name="Young S."/>
            <person name="Zeng Q."/>
            <person name="Abouelleil A."/>
            <person name="Aftuck L."/>
            <person name="Bessette D."/>
            <person name="Brown A."/>
            <person name="FitzGerald M."/>
            <person name="Lui A."/>
            <person name="Macdonald J.P."/>
            <person name="Priest M."/>
            <person name="Orbach M.J."/>
            <person name="Galgiani J.N."/>
            <person name="Kirkland T.N."/>
            <person name="Cole G.T."/>
            <person name="Birren B.W."/>
            <person name="Henn M.R."/>
            <person name="Taylor J.W."/>
            <person name="Rounsley S.D."/>
        </authorList>
    </citation>
    <scope>GENOME REANNOTATION</scope>
    <source>
        <strain>RS</strain>
    </source>
</reference>